<gene>
    <name evidence="1" type="primary">dadA</name>
    <name type="ordered locus">Bpet2578</name>
</gene>
<name>DADA_BORPD</name>
<keyword id="KW-0274">FAD</keyword>
<keyword id="KW-0285">Flavoprotein</keyword>
<keyword id="KW-0560">Oxidoreductase</keyword>
<proteinExistence type="inferred from homology"/>
<dbReference type="EC" id="1.4.99.-" evidence="1"/>
<dbReference type="EMBL" id="AM902716">
    <property type="protein sequence ID" value="CAP42920.1"/>
    <property type="molecule type" value="Genomic_DNA"/>
</dbReference>
<dbReference type="SMR" id="A9IP97"/>
<dbReference type="STRING" id="94624.Bpet2578"/>
<dbReference type="KEGG" id="bpt:Bpet2578"/>
<dbReference type="eggNOG" id="COG0665">
    <property type="taxonomic scope" value="Bacteria"/>
</dbReference>
<dbReference type="UniPathway" id="UPA00043">
    <property type="reaction ID" value="UER00498"/>
</dbReference>
<dbReference type="Proteomes" id="UP000001225">
    <property type="component" value="Chromosome"/>
</dbReference>
<dbReference type="GO" id="GO:0005737">
    <property type="term" value="C:cytoplasm"/>
    <property type="evidence" value="ECO:0007669"/>
    <property type="project" value="TreeGrafter"/>
</dbReference>
<dbReference type="GO" id="GO:0005886">
    <property type="term" value="C:plasma membrane"/>
    <property type="evidence" value="ECO:0007669"/>
    <property type="project" value="TreeGrafter"/>
</dbReference>
<dbReference type="GO" id="GO:0008718">
    <property type="term" value="F:D-amino-acid dehydrogenase activity"/>
    <property type="evidence" value="ECO:0007669"/>
    <property type="project" value="UniProtKB-UniRule"/>
</dbReference>
<dbReference type="GO" id="GO:0055130">
    <property type="term" value="P:D-alanine catabolic process"/>
    <property type="evidence" value="ECO:0007669"/>
    <property type="project" value="UniProtKB-UniPathway"/>
</dbReference>
<dbReference type="FunFam" id="3.50.50.60:FF:000020">
    <property type="entry name" value="D-amino acid dehydrogenase"/>
    <property type="match status" value="1"/>
</dbReference>
<dbReference type="Gene3D" id="3.30.9.10">
    <property type="entry name" value="D-Amino Acid Oxidase, subunit A, domain 2"/>
    <property type="match status" value="1"/>
</dbReference>
<dbReference type="Gene3D" id="3.50.50.60">
    <property type="entry name" value="FAD/NAD(P)-binding domain"/>
    <property type="match status" value="2"/>
</dbReference>
<dbReference type="HAMAP" id="MF_01202">
    <property type="entry name" value="DadA"/>
    <property type="match status" value="1"/>
</dbReference>
<dbReference type="InterPro" id="IPR023080">
    <property type="entry name" value="DadA"/>
</dbReference>
<dbReference type="InterPro" id="IPR006076">
    <property type="entry name" value="FAD-dep_OxRdtase"/>
</dbReference>
<dbReference type="InterPro" id="IPR036188">
    <property type="entry name" value="FAD/NAD-bd_sf"/>
</dbReference>
<dbReference type="NCBIfam" id="NF001933">
    <property type="entry name" value="PRK00711.1"/>
    <property type="match status" value="1"/>
</dbReference>
<dbReference type="PANTHER" id="PTHR13847:SF280">
    <property type="entry name" value="D-AMINO ACID DEHYDROGENASE"/>
    <property type="match status" value="1"/>
</dbReference>
<dbReference type="PANTHER" id="PTHR13847">
    <property type="entry name" value="SARCOSINE DEHYDROGENASE-RELATED"/>
    <property type="match status" value="1"/>
</dbReference>
<dbReference type="Pfam" id="PF01266">
    <property type="entry name" value="DAO"/>
    <property type="match status" value="1"/>
</dbReference>
<dbReference type="SUPFAM" id="SSF54373">
    <property type="entry name" value="FAD-linked reductases, C-terminal domain"/>
    <property type="match status" value="1"/>
</dbReference>
<dbReference type="SUPFAM" id="SSF51905">
    <property type="entry name" value="FAD/NAD(P)-binding domain"/>
    <property type="match status" value="1"/>
</dbReference>
<accession>A9IP97</accession>
<comment type="function">
    <text evidence="1">Oxidative deamination of D-amino acids.</text>
</comment>
<comment type="catalytic activity">
    <reaction evidence="1">
        <text>a D-alpha-amino acid + A + H2O = a 2-oxocarboxylate + AH2 + NH4(+)</text>
        <dbReference type="Rhea" id="RHEA:18125"/>
        <dbReference type="ChEBI" id="CHEBI:13193"/>
        <dbReference type="ChEBI" id="CHEBI:15377"/>
        <dbReference type="ChEBI" id="CHEBI:17499"/>
        <dbReference type="ChEBI" id="CHEBI:28938"/>
        <dbReference type="ChEBI" id="CHEBI:35179"/>
        <dbReference type="ChEBI" id="CHEBI:59871"/>
    </reaction>
</comment>
<comment type="cofactor">
    <cofactor evidence="1">
        <name>FAD</name>
        <dbReference type="ChEBI" id="CHEBI:57692"/>
    </cofactor>
</comment>
<comment type="pathway">
    <text>Amino-acid degradation; D-alanine degradation; NH(3) and pyruvate from D-alanine: step 1/1.</text>
</comment>
<comment type="similarity">
    <text evidence="1">Belongs to the DadA oxidoreductase family.</text>
</comment>
<reference key="1">
    <citation type="journal article" date="2008" name="BMC Genomics">
        <title>The missing link: Bordetella petrii is endowed with both the metabolic versatility of environmental bacteria and virulence traits of pathogenic Bordetellae.</title>
        <authorList>
            <person name="Gross R."/>
            <person name="Guzman C.A."/>
            <person name="Sebaihia M."/>
            <person name="Martin dos Santos V.A.P."/>
            <person name="Pieper D.H."/>
            <person name="Koebnik R."/>
            <person name="Lechner M."/>
            <person name="Bartels D."/>
            <person name="Buhrmester J."/>
            <person name="Choudhuri J.V."/>
            <person name="Ebensen T."/>
            <person name="Gaigalat L."/>
            <person name="Herrmann S."/>
            <person name="Khachane A.N."/>
            <person name="Larisch C."/>
            <person name="Link S."/>
            <person name="Linke B."/>
            <person name="Meyer F."/>
            <person name="Mormann S."/>
            <person name="Nakunst D."/>
            <person name="Rueckert C."/>
            <person name="Schneiker-Bekel S."/>
            <person name="Schulze K."/>
            <person name="Voerholter F.-J."/>
            <person name="Yevsa T."/>
            <person name="Engle J.T."/>
            <person name="Goldman W.E."/>
            <person name="Puehler A."/>
            <person name="Goebel U.B."/>
            <person name="Goesmann A."/>
            <person name="Bloecker H."/>
            <person name="Kaiser O."/>
            <person name="Martinez-Arias R."/>
        </authorList>
    </citation>
    <scope>NUCLEOTIDE SEQUENCE [LARGE SCALE GENOMIC DNA]</scope>
    <source>
        <strain>ATCC BAA-461 / DSM 12804 / CCUG 43448</strain>
    </source>
</reference>
<organism>
    <name type="scientific">Bordetella petrii (strain ATCC BAA-461 / DSM 12804 / CCUG 43448)</name>
    <dbReference type="NCBI Taxonomy" id="340100"/>
    <lineage>
        <taxon>Bacteria</taxon>
        <taxon>Pseudomonadati</taxon>
        <taxon>Pseudomonadota</taxon>
        <taxon>Betaproteobacteria</taxon>
        <taxon>Burkholderiales</taxon>
        <taxon>Alcaligenaceae</taxon>
        <taxon>Bordetella</taxon>
    </lineage>
</organism>
<feature type="chain" id="PRO_1000138639" description="D-amino acid dehydrogenase">
    <location>
        <begin position="1"/>
        <end position="434"/>
    </location>
</feature>
<feature type="binding site" evidence="1">
    <location>
        <begin position="3"/>
        <end position="17"/>
    </location>
    <ligand>
        <name>FAD</name>
        <dbReference type="ChEBI" id="CHEBI:57692"/>
    </ligand>
</feature>
<sequence length="434" mass="46814">MHVIVLGSGVIGTTTAYYLARQGAKVTVLDRQPEAACETSYANAGQVSPGYSTPWAAPGIPFKALKWLFQKDAPLAIRPDGTLYQWRWMAAMLANCTAGRYTVNKERMLRLAEYSRDCLRELRADTGIQYEARTLGTLQLFRSASQYQAAQRDIQVLDACGVPYELLDSARLQTVEPALARTAHKLAGGLRLPNDETGDCRLFTRRLAQLAAGLGVEFRYGQDVEALVAGGAEIRGVRVGGETLAADRYVAAFGSYTRGFLAPLGLELPVYPVKGYSLTIPLASAEAAPVSTVLDETYKVAITRFDNRIRVGGMAELAGFDLGLNPAHRRTLEHVVTDLYPGCGEVAQAEFWTGLRPMTPDSTPIVGATRYANLFLNTGHGTLGWTMACGSGKVVADLVTGQRPAIRADDLALARYQAAQTRHAGPALGERSAA</sequence>
<evidence type="ECO:0000255" key="1">
    <source>
        <dbReference type="HAMAP-Rule" id="MF_01202"/>
    </source>
</evidence>
<protein>
    <recommendedName>
        <fullName evidence="1">D-amino acid dehydrogenase</fullName>
        <ecNumber evidence="1">1.4.99.-</ecNumber>
    </recommendedName>
</protein>